<keyword id="KW-0903">Direct protein sequencing</keyword>
<keyword id="KW-0325">Glycoprotein</keyword>
<keyword id="KW-0472">Membrane</keyword>
<keyword id="KW-0597">Phosphoprotein</keyword>
<keyword id="KW-0730">Sialic acid</keyword>
<keyword id="KW-0812">Transmembrane</keyword>
<keyword id="KW-1133">Transmembrane helix</keyword>
<evidence type="ECO:0000250" key="1">
    <source>
        <dbReference type="UniProtKB" id="P02724"/>
    </source>
</evidence>
<evidence type="ECO:0000255" key="2"/>
<evidence type="ECO:0000256" key="3">
    <source>
        <dbReference type="SAM" id="MobiDB-lite"/>
    </source>
</evidence>
<evidence type="ECO:0000305" key="4"/>
<proteinExistence type="evidence at protein level"/>
<name>GLPA_MACFU</name>
<feature type="chain" id="PRO_0000149047" description="Glycophorin-A">
    <location>
        <begin position="1"/>
        <end position="144"/>
    </location>
</feature>
<feature type="transmembrane region" description="Helical" evidence="2">
    <location>
        <begin position="70"/>
        <end position="92"/>
    </location>
</feature>
<feature type="region of interest" description="Disordered" evidence="3">
    <location>
        <begin position="1"/>
        <end position="55"/>
    </location>
</feature>
<feature type="region of interest" description="Disordered" evidence="3">
    <location>
        <begin position="101"/>
        <end position="144"/>
    </location>
</feature>
<feature type="compositionally biased region" description="Polar residues" evidence="3">
    <location>
        <begin position="1"/>
        <end position="25"/>
    </location>
</feature>
<feature type="compositionally biased region" description="Polar residues" evidence="3">
    <location>
        <begin position="33"/>
        <end position="48"/>
    </location>
</feature>
<feature type="compositionally biased region" description="Acidic residues" evidence="3">
    <location>
        <begin position="121"/>
        <end position="130"/>
    </location>
</feature>
<feature type="modified residue" description="Phosphoserine" evidence="1">
    <location>
        <position position="118"/>
    </location>
</feature>
<feature type="glycosylation site" description="O-linked (GalNAc...) serine">
    <location>
        <position position="2"/>
    </location>
</feature>
<feature type="glycosylation site" description="O-linked (GalNAc...) threonine">
    <location>
        <position position="3"/>
    </location>
</feature>
<feature type="glycosylation site" description="O-linked (GalNAc...) threonine">
    <location>
        <position position="4"/>
    </location>
</feature>
<feature type="glycosylation site" description="O-linked (GalNAc...) threonine">
    <location>
        <position position="8"/>
    </location>
</feature>
<feature type="glycosylation site" description="O-linked (GalNAc...) threonine">
    <location>
        <position position="10"/>
    </location>
</feature>
<feature type="glycosylation site" description="O-linked (GalNAc...) serine">
    <location>
        <position position="11"/>
    </location>
</feature>
<feature type="glycosylation site" description="O-linked (GalNAc...) serine">
    <location>
        <position position="12"/>
    </location>
</feature>
<feature type="glycosylation site" description="O-linked (GalNAc...) serine">
    <location>
        <position position="13"/>
    </location>
</feature>
<feature type="glycosylation site" description="O-linked (GalNAc...) serine">
    <location>
        <position position="14"/>
    </location>
</feature>
<feature type="glycosylation site" description="O-linked (GalNAc...) serine">
    <location>
        <position position="22"/>
    </location>
</feature>
<feature type="glycosylation site" description="O-linked (GalNAc...) serine">
    <location>
        <position position="23"/>
    </location>
</feature>
<feature type="glycosylation site" description="O-linked (GalNAc...) threonine">
    <location>
        <position position="30"/>
    </location>
</feature>
<feature type="glycosylation site" description="O-linked (GalNAc...) threonine">
    <location>
        <position position="36"/>
    </location>
</feature>
<feature type="glycosylation site" description="O-linked (GalNAc...) threonine">
    <location>
        <position position="38"/>
    </location>
</feature>
<feature type="glycosylation site" description="O-linked (GalNAc...) threonine">
    <location>
        <position position="44"/>
    </location>
</feature>
<feature type="glycosylation site" description="O-linked (GalNAc...) threonine">
    <location>
        <position position="45"/>
    </location>
</feature>
<feature type="glycosylation site" description="O-linked (GalNAc...) serine">
    <location>
        <position position="48"/>
    </location>
</feature>
<feature type="glycosylation site" description="O-linked (GalNAc...) threonine">
    <location>
        <position position="51"/>
    </location>
</feature>
<feature type="sequence variant">
    <original>K</original>
    <variation>R</variation>
    <location>
        <position position="28"/>
    </location>
</feature>
<gene>
    <name evidence="1" type="primary">GYPA</name>
</gene>
<reference key="1">
    <citation type="journal article" date="1989" name="Biochim. Biophys. Acta">
        <title>Amino acid sequence of monkey erythrocyte glycophorin MK. Its amino acid sequence has a striking homology with that of human glycophorin A.</title>
        <authorList>
            <person name="Murayama J."/>
            <person name="Utsumi H."/>
            <person name="Hamada A."/>
        </authorList>
    </citation>
    <scope>PROTEIN SEQUENCE</scope>
</reference>
<comment type="function">
    <text evidence="1">Component of the ankyrin-1 complex, a multiprotein complex involved in the stability and shape of the erythrocyte membrane. Glycophorin A is the major intrinsic membrane protein of the erythrocyte. The N-terminal glycosylated segment, which lies outside the erythrocyte membrane, has MN blood group receptors. Appears to be important for the function of SLC4A1 and is required for high activity of SLC4A1. May be involved in translocation of SLC4A1 to the plasma membrane.</text>
</comment>
<comment type="subunit">
    <text evidence="1">Homodimer. Component of the ankyrin-1 complex in the erythrocyte, composed of ANK1, RHCE, RHAG, SLC4A1, EPB42, GYPA, GYPB and AQP1. Interacts with SLC4A1; a GYPA monomer is bound at each end of the SLC4A1 dimer forming a heterotetramer.</text>
</comment>
<comment type="subcellular location">
    <subcellularLocation>
        <location>Membrane</location>
        <topology>Single-pass type I membrane protein</topology>
    </subcellularLocation>
</comment>
<comment type="similarity">
    <text evidence="4">Belongs to the glycophorin-A family.</text>
</comment>
<sequence>SSTTVPATHTSSSSLGPEQYVSSQSNDKHTSDSHPTPTSAHEVTTEFSGRTHYPPEEDDRVQLVHEFSELVIALIIFGVMAGVIGTILFISYGSRRLIKKSESDVQPLPPPDAEVPLSSVEIEDPEETDELNSFTKPNQERNES</sequence>
<dbReference type="SMR" id="P14221"/>
<dbReference type="GlyConnect" id="190">
    <property type="glycosylation" value="1 O-Linked glycan"/>
</dbReference>
<dbReference type="GlyCosmos" id="P14221">
    <property type="glycosylation" value="18 sites, 1 glycan"/>
</dbReference>
<dbReference type="GO" id="GO:0170014">
    <property type="term" value="C:ankyrin-1 complex"/>
    <property type="evidence" value="ECO:0000250"/>
    <property type="project" value="UniProtKB"/>
</dbReference>
<dbReference type="GO" id="GO:0005886">
    <property type="term" value="C:plasma membrane"/>
    <property type="evidence" value="ECO:0007669"/>
    <property type="project" value="TreeGrafter"/>
</dbReference>
<dbReference type="Gene3D" id="1.20.5.70">
    <property type="match status" value="1"/>
</dbReference>
<dbReference type="InterPro" id="IPR001195">
    <property type="entry name" value="Glycophorin"/>
</dbReference>
<dbReference type="InterPro" id="IPR018938">
    <property type="entry name" value="Glycophorin_CS"/>
</dbReference>
<dbReference type="InterPro" id="IPR049535">
    <property type="entry name" value="GYPA_B"/>
</dbReference>
<dbReference type="PANTHER" id="PTHR13813">
    <property type="entry name" value="GLYCOPHORIN"/>
    <property type="match status" value="1"/>
</dbReference>
<dbReference type="PANTHER" id="PTHR13813:SF3">
    <property type="entry name" value="GLYCOPHORIN-A"/>
    <property type="match status" value="1"/>
</dbReference>
<dbReference type="Pfam" id="PF01102">
    <property type="entry name" value="Glycophorin_A"/>
    <property type="match status" value="1"/>
</dbReference>
<dbReference type="PIRSF" id="PIRSF002466">
    <property type="entry name" value="Glycophorin"/>
    <property type="match status" value="1"/>
</dbReference>
<dbReference type="PROSITE" id="PS00312">
    <property type="entry name" value="GLYCOPHORIN_A"/>
    <property type="match status" value="1"/>
</dbReference>
<protein>
    <recommendedName>
        <fullName evidence="1">Glycophorin-A</fullName>
    </recommendedName>
    <alternativeName>
        <fullName>Glycophorin-MK</fullName>
    </alternativeName>
    <cdAntigenName>CD235a</cdAntigenName>
</protein>
<accession>P14221</accession>
<organism>
    <name type="scientific">Macaca fuscata fuscata</name>
    <name type="common">Japanese macaque</name>
    <dbReference type="NCBI Taxonomy" id="9543"/>
    <lineage>
        <taxon>Eukaryota</taxon>
        <taxon>Metazoa</taxon>
        <taxon>Chordata</taxon>
        <taxon>Craniata</taxon>
        <taxon>Vertebrata</taxon>
        <taxon>Euteleostomi</taxon>
        <taxon>Mammalia</taxon>
        <taxon>Eutheria</taxon>
        <taxon>Euarchontoglires</taxon>
        <taxon>Primates</taxon>
        <taxon>Haplorrhini</taxon>
        <taxon>Catarrhini</taxon>
        <taxon>Cercopithecidae</taxon>
        <taxon>Cercopithecinae</taxon>
        <taxon>Macaca</taxon>
    </lineage>
</organism>